<dbReference type="EMBL" id="L40585">
    <property type="protein sequence ID" value="AAA98334.1"/>
    <property type="molecule type" value="Genomic_DNA"/>
</dbReference>
<dbReference type="EMBL" id="M59825">
    <property type="protein sequence ID" value="AAA26418.1"/>
    <property type="molecule type" value="Genomic_DNA"/>
</dbReference>
<dbReference type="EMBL" id="L03728">
    <property type="protein sequence ID" value="AAA91498.1"/>
    <property type="molecule type" value="Genomic_DNA"/>
</dbReference>
<dbReference type="EMBL" id="L05507">
    <property type="protein sequence ID" value="AAA92774.1"/>
    <property type="molecule type" value="Genomic_DNA"/>
</dbReference>
<dbReference type="PIR" id="A37141">
    <property type="entry name" value="A37141"/>
</dbReference>
<dbReference type="PIR" id="S32830">
    <property type="entry name" value="S32830"/>
</dbReference>
<dbReference type="RefSeq" id="WP_011205807.1">
    <property type="nucleotide sequence ID" value="NZ_VMTS01000064.1"/>
</dbReference>
<dbReference type="PDB" id="2AN7">
    <property type="method" value="NMR"/>
    <property type="chains" value="A/B=1-83"/>
</dbReference>
<dbReference type="PDBsum" id="2AN7"/>
<dbReference type="BMRB" id="P22995"/>
<dbReference type="SMR" id="P22995"/>
<dbReference type="DIP" id="DIP-27657N"/>
<dbReference type="EvolutionaryTrace" id="P22995"/>
<dbReference type="GO" id="GO:0042803">
    <property type="term" value="F:protein homodimerization activity"/>
    <property type="evidence" value="ECO:0000314"/>
    <property type="project" value="UniProtKB"/>
</dbReference>
<dbReference type="GO" id="GO:0043565">
    <property type="term" value="F:sequence-specific DNA binding"/>
    <property type="evidence" value="ECO:0000314"/>
    <property type="project" value="UniProtKB"/>
</dbReference>
<dbReference type="GO" id="GO:0097351">
    <property type="term" value="F:toxin sequestering activity"/>
    <property type="evidence" value="ECO:0000315"/>
    <property type="project" value="DisProt"/>
</dbReference>
<dbReference type="GO" id="GO:0045892">
    <property type="term" value="P:negative regulation of DNA-templated transcription"/>
    <property type="evidence" value="ECO:0000314"/>
    <property type="project" value="UniProtKB"/>
</dbReference>
<dbReference type="GO" id="GO:0030541">
    <property type="term" value="P:plasmid partitioning"/>
    <property type="evidence" value="ECO:0000316"/>
    <property type="project" value="UniProtKB"/>
</dbReference>
<dbReference type="GO" id="GO:0051290">
    <property type="term" value="P:protein heterotetramerization"/>
    <property type="evidence" value="ECO:0000314"/>
    <property type="project" value="UniProtKB"/>
</dbReference>
<dbReference type="DisProt" id="DP00833"/>
<dbReference type="Gene3D" id="6.10.180.10">
    <property type="entry name" value="Antitoxin ParD"/>
    <property type="match status" value="1"/>
</dbReference>
<dbReference type="InterPro" id="IPR022789">
    <property type="entry name" value="ParD"/>
</dbReference>
<dbReference type="InterPro" id="IPR038296">
    <property type="entry name" value="ParD_sf"/>
</dbReference>
<dbReference type="InterPro" id="IPR010985">
    <property type="entry name" value="Ribbon_hlx_hlx"/>
</dbReference>
<dbReference type="Pfam" id="PF09386">
    <property type="entry name" value="ParD"/>
    <property type="match status" value="1"/>
</dbReference>
<dbReference type="SUPFAM" id="SSF47598">
    <property type="entry name" value="Ribbon-helix-helix"/>
    <property type="match status" value="1"/>
</dbReference>
<organism>
    <name type="scientific">Escherichia coli</name>
    <dbReference type="NCBI Taxonomy" id="562"/>
    <lineage>
        <taxon>Bacteria</taxon>
        <taxon>Pseudomonadati</taxon>
        <taxon>Pseudomonadota</taxon>
        <taxon>Gammaproteobacteria</taxon>
        <taxon>Enterobacterales</taxon>
        <taxon>Enterobacteriaceae</taxon>
        <taxon>Escherichia</taxon>
    </lineage>
</organism>
<evidence type="ECO:0000269" key="1">
    <source>
    </source>
</evidence>
<evidence type="ECO:0000269" key="2">
    <source>
    </source>
</evidence>
<evidence type="ECO:0000269" key="3">
    <source>
    </source>
</evidence>
<evidence type="ECO:0000269" key="4">
    <source>
    </source>
</evidence>
<evidence type="ECO:0000269" key="5">
    <source>
    </source>
</evidence>
<evidence type="ECO:0000269" key="6">
    <source>
    </source>
</evidence>
<evidence type="ECO:0000269" key="7">
    <source>
    </source>
</evidence>
<evidence type="ECO:0007829" key="8">
    <source>
        <dbReference type="PDB" id="2AN7"/>
    </source>
</evidence>
<comment type="function">
    <text evidence="2 3 5 7">Antitoxin component of a type II toxin-antitoxin (TA) system involved in plasmid partition. Inhibits the anti-DNA gyrase activity of toxin ParE; reverses and restores gyrase catalytic activity in vitro. The parDE operon alone is capable of stabilizing an RK2-derived minireplicon under defined growth conditions in several different Gram-negative bacteria. It does so by the post-segregational killing (PSK) of plasmid-free cells, also referred to as a plasmid addiction system. Binds its own promoter, autorepressing it; gentically only ParD is required for full autorepression.</text>
</comment>
<comment type="subunit">
    <text evidence="1 4 6 7">Forms a homodimer in solution, interacts with ParD, possibly as a ParD(2)-ParE(2) heterotetramer, which neutralizes the toxic activity of ParE. Both the homodimer and heterotetramer bind DNA, although genetically only ParD is required for full operon repression. Another study has shown that it is a ParD homotetramer that binds the promoter (PubMed:10661868).</text>
</comment>
<comment type="mass spectrometry"/>
<comment type="miscellaneous">
    <text>Plasmid IncP-alpha RK2 is maintained at 5-8 copies per chromosome.</text>
</comment>
<name>PARD_ECOLX</name>
<feature type="chain" id="PRO_0000068411" description="Antitoxin ParD">
    <location>
        <begin position="1"/>
        <end position="83"/>
    </location>
</feature>
<feature type="mutagenesis site" description="Binds DNA very poorly, plasmid stability maintained." evidence="6">
    <original>Q</original>
    <variation>IDLDQ</variation>
    <location>
        <position position="12"/>
    </location>
</feature>
<feature type="strand" evidence="8">
    <location>
        <begin position="2"/>
        <end position="8"/>
    </location>
</feature>
<feature type="helix" evidence="8">
    <location>
        <begin position="10"/>
        <end position="23"/>
    </location>
</feature>
<feature type="helix" evidence="8">
    <location>
        <begin position="27"/>
        <end position="34"/>
    </location>
</feature>
<feature type="helix" evidence="8">
    <location>
        <begin position="42"/>
        <end position="52"/>
    </location>
</feature>
<feature type="strand" evidence="8">
    <location>
        <begin position="66"/>
        <end position="68"/>
    </location>
</feature>
<feature type="strand" evidence="8">
    <location>
        <begin position="74"/>
        <end position="76"/>
    </location>
</feature>
<protein>
    <recommendedName>
        <fullName>Antitoxin ParD</fullName>
    </recommendedName>
</protein>
<geneLocation type="plasmid">
    <name>IncP-alpha RP4</name>
</geneLocation>
<geneLocation type="plasmid">
    <name>IncP-alpha RK2</name>
</geneLocation>
<gene>
    <name type="primary">parD</name>
</gene>
<reference key="1">
    <citation type="journal article" date="1990" name="J. Bacteriol.">
        <title>Partitioning of broad-host-range plasmid RP4 is a complex system involving site-specific recombination.</title>
        <authorList>
            <person name="Gerlitz M."/>
            <person name="Hrabak O."/>
            <person name="Schwab H."/>
        </authorList>
    </citation>
    <scope>NUCLEOTIDE SEQUENCE [GENOMIC DNA]</scope>
    <source>
        <plasmid>IncP-alpha RP4</plasmid>
    </source>
</reference>
<reference key="2">
    <citation type="journal article" date="1993" name="J. Mol. Biol.">
        <title>Tn5053, a mercury resistance transposon with integron's ends.</title>
        <authorList>
            <person name="Kholodii G.Y."/>
            <person name="Yurieva O.V."/>
            <person name="Lomovskaya O.L."/>
            <person name="Gorlenko Z.M."/>
            <person name="Mindlin S.Z."/>
            <person name="Nikiforov V.G."/>
        </authorList>
    </citation>
    <scope>NUCLEOTIDE SEQUENCE [GENOMIC DNA]</scope>
    <source>
        <plasmid>IncP-alpha RP4</plasmid>
    </source>
</reference>
<reference key="3">
    <citation type="journal article" date="1992" name="J. Bacteriol.">
        <title>Definition of a minimal plasmid stabilization system from the broad-host-range plasmid RK2.</title>
        <authorList>
            <person name="Roberts R.C."/>
            <person name="Helinski D.R."/>
        </authorList>
    </citation>
    <scope>NUCLEOTIDE SEQUENCE [GENOMIC DNA]</scope>
    <scope>FUNCTION IN PLASMID PARTITIONING</scope>
    <scope>TRANSCRIPTIONAL REGULATION</scope>
    <source>
        <plasmid>IncP-alpha RK2</plasmid>
    </source>
</reference>
<reference key="4">
    <citation type="journal article" date="1993" name="J. Biol. Chem.">
        <title>Characteristics and significance of DNA binding activity of plasmid stabilization protein ParD from the broad host-range plasmid RK2.</title>
        <authorList>
            <person name="Roberts R.C."/>
            <person name="Spangler C."/>
            <person name="Helinski D.R."/>
        </authorList>
    </citation>
    <scope>DNA-BINDING</scope>
    <scope>SUBUNIT</scope>
    <scope>MUTAGENESIS OF GLN-12</scope>
</reference>
<reference key="5">
    <citation type="journal article" date="1994" name="J. Mol. Biol.">
        <title>The parDE operon of the broad-host-range plasmid RK2 specifies growth inhibition associated with plasmid loss.</title>
        <authorList>
            <person name="Roberts R.C."/>
            <person name="Strom A.R."/>
            <person name="Helinski D.R."/>
        </authorList>
    </citation>
    <scope>FUNCTION AS AN ANTITOXIN</scope>
</reference>
<reference key="6">
    <citation type="journal article" date="1996" name="J. Bacteriol.">
        <title>Plasmid RK2 toxin protein ParE: purification and interaction with the ParD antitoxin protein.</title>
        <authorList>
            <person name="Johnson E.P."/>
            <person name="Strom A.R."/>
            <person name="Helinski D.R."/>
        </authorList>
    </citation>
    <scope>FUNCTION AS AN ANTITOXIN</scope>
    <scope>SUBUNIT</scope>
    <scope>INTERACTION WITH PARE</scope>
    <source>
        <plasmid>IncP-alpha RK2</plasmid>
    </source>
</reference>
<reference key="7">
    <citation type="journal article" date="1999" name="Biol. Chem.">
        <title>Thermodynamic properties and DNA binding of the ParD protein from the broad host-range plasmid RK2/RP4 killing system.</title>
        <authorList>
            <person name="Oberer M."/>
            <person name="Lindner H."/>
            <person name="Glatter O."/>
            <person name="Kratky C."/>
            <person name="Keller W."/>
        </authorList>
    </citation>
    <scope>MASS SPECTROMETRY</scope>
    <scope>SUBUNIT</scope>
</reference>
<reference key="8">
    <citation type="journal article" date="2002" name="Mol. Microbiol.">
        <title>ParE toxin encoded by the broad-host-range plasmid RK2 is an inhibitor of Escherichia coli gyrase.</title>
        <authorList>
            <person name="Jiang Y."/>
            <person name="Pogliano J."/>
            <person name="Helinski D.R."/>
            <person name="Konieczny I."/>
        </authorList>
    </citation>
    <scope>FUNCTION AS AN ANTI-GYRASE INHIBITOR</scope>
    <source>
        <plasmid>IncP-alpha RK2</plasmid>
    </source>
</reference>
<reference key="9">
    <citation type="journal article" date="2002" name="Biochem. J.">
        <title>The anti-toxin ParD of plasmid RK2 consists of two structurally distinct moieties and belongs to the ribbon-helix-helix family of DNA-binding proteins.</title>
        <authorList>
            <person name="Oberer M."/>
            <person name="Zangger K."/>
            <person name="Prytulla S."/>
            <person name="Keller W."/>
        </authorList>
    </citation>
    <scope>PRELIMINARY STRUCTURE BY NMR</scope>
</reference>
<reference key="10">
    <citation type="journal article" date="2007" name="Protein Sci.">
        <title>The solution structure of ParD, the antidote of the ParDE toxin antitoxin module, provides the structural basis for DNA and toxin binding.</title>
        <authorList>
            <person name="Oberer M."/>
            <person name="Zangger K."/>
            <person name="Gruber K."/>
            <person name="Keller W."/>
        </authorList>
    </citation>
    <scope>STRUCTURE BY NMR</scope>
    <scope>SUBUNIT</scope>
</reference>
<sequence>MSRLTIDMTDQQHQSLKALAALQGKTIKQYALERLFPGDADADQAWQELKTMLGNRINDGLAGKVSTKSVGEILDEELSGDRA</sequence>
<keyword id="KW-0002">3D-structure</keyword>
<keyword id="KW-0238">DNA-binding</keyword>
<keyword id="KW-0614">Plasmid</keyword>
<keyword id="KW-0616">Plasmid partition</keyword>
<keyword id="KW-0678">Repressor</keyword>
<keyword id="KW-1277">Toxin-antitoxin system</keyword>
<keyword id="KW-0804">Transcription</keyword>
<keyword id="KW-0805">Transcription regulation</keyword>
<proteinExistence type="evidence at protein level"/>
<accession>P22995</accession>